<organism>
    <name type="scientific">Caenorhabditis elegans</name>
    <dbReference type="NCBI Taxonomy" id="6239"/>
    <lineage>
        <taxon>Eukaryota</taxon>
        <taxon>Metazoa</taxon>
        <taxon>Ecdysozoa</taxon>
        <taxon>Nematoda</taxon>
        <taxon>Chromadorea</taxon>
        <taxon>Rhabditida</taxon>
        <taxon>Rhabditina</taxon>
        <taxon>Rhabditomorpha</taxon>
        <taxon>Rhabditoidea</taxon>
        <taxon>Rhabditidae</taxon>
        <taxon>Peloderinae</taxon>
        <taxon>Caenorhabditis</taxon>
    </lineage>
</organism>
<evidence type="ECO:0000255" key="1"/>
<evidence type="ECO:0000269" key="2">
    <source>
    </source>
</evidence>
<evidence type="ECO:0000269" key="3">
    <source>
    </source>
</evidence>
<evidence type="ECO:0000269" key="4">
    <source>
    </source>
</evidence>
<evidence type="ECO:0000305" key="5"/>
<name>PEPT2_CAEEL</name>
<sequence length="785" mass="87567">MGASHLHDDPRPGSPVDHQPTTWGGIIKKWPKQTFLIVGNELCERFSFYGMRAVLTLYFFNILNFSQSFSTVLFHAFTVICYSSPLLGSILADGYIGKFWTIFFISIFYACGQILLAFSSIAPSGSSHHPLLDLLGLLIVGLGTGGIKPCVSAFGGDQFPAHYTRMISLFFSMFYFSINAGSLISMWLTPYFRSMSCFGHDSCYPLAFGIPAILMIVATLVFMAGSFWYKKVPPKENIIFKVIGTITTALRKKASSSSTHQRSHWLEYSLDGHDCALSTECKNLHGNCAQRRYIEDIKRLFRVIVMMIPVPMFWALYDQQGSTWVLQAVGMDAKVFGFEILPDQMGVLNAFLILFFIPIFQSIVYPTIEKLGFQMTMLRKMAGGGILTAVSFFVCGIVQLFVNPTLPYIPMANEAHLTIINTIPSCDFNVLIDSREPFDLLRKSGIAPDDSVRKPISFTGDDFFQPNITFDNLAPNCPKFTAEPMLAPATSYVLTLSPNGWAYNAVRPEKPKSGKGELSMGLNLIVPCDKIPSNVTWEQCNGTEGYSGAIALCKVESDVITDNNNVCDPTAKGKFYVLSNANPLDVHDFSKKSTVTAFGRTYSPIEMKPGTYRLFYTDDSRTHFTPLNLPPVQQDHMGGQYLITVSTRSKNDSEVLATTESLVSYNRVSILWQIPQYVILTAGEVLFSITGLEFAYTEASPQLKSVVQALWLFTTAIGDLIVVVIFMLNIFSDVAVQMFVFGGIMLFVIFVFILLAVFYYEYADYSNESEVLTEKMIVDDDHTRI</sequence>
<gene>
    <name type="primary">pept-2</name>
    <name type="synonym">cpta</name>
    <name type="synonym">opt-1</name>
    <name type="synonym">pep-1</name>
    <name type="ORF">C06G8.2</name>
</gene>
<comment type="function">
    <text evidence="4">Proton-dependent uptake of di- or tripeptides, and to a minor extent tetrapeptides. Transport is independent of sodium and chloride ions. Protein shows high affinity to peptide substrates.</text>
</comment>
<comment type="subcellular location">
    <subcellularLocation>
        <location evidence="5">Membrane</location>
        <topology evidence="5">Multi-pass membrane protein</topology>
    </subcellularLocation>
</comment>
<comment type="tissue specificity">
    <text evidence="2">Expressed in vulval, pharyngeal and anal muscles.</text>
</comment>
<comment type="developmental stage">
    <text evidence="4">Gradual increase in expression during development from embryo through to adult with highest levels of expression in the late larval and adult stages.</text>
</comment>
<comment type="similarity">
    <text evidence="5">Belongs to the major facilitator superfamily. Proton-dependent oligopeptide transporter (POT/PTR) (TC 2.A.17) family.</text>
</comment>
<feature type="chain" id="PRO_0000064313" description="Peptide transporter family 2">
    <location>
        <begin position="1"/>
        <end position="785"/>
    </location>
</feature>
<feature type="transmembrane region" description="Helical" evidence="1">
    <location>
        <begin position="46"/>
        <end position="66"/>
    </location>
</feature>
<feature type="transmembrane region" description="Helical" evidence="1">
    <location>
        <begin position="72"/>
        <end position="92"/>
    </location>
</feature>
<feature type="transmembrane region" description="Helical" evidence="1">
    <location>
        <begin position="99"/>
        <end position="119"/>
    </location>
</feature>
<feature type="transmembrane region" description="Helical" evidence="1">
    <location>
        <begin position="134"/>
        <end position="154"/>
    </location>
</feature>
<feature type="transmembrane region" description="Helical" evidence="1">
    <location>
        <begin position="167"/>
        <end position="187"/>
    </location>
</feature>
<feature type="transmembrane region" description="Helical" evidence="1">
    <location>
        <begin position="208"/>
        <end position="228"/>
    </location>
</feature>
<feature type="transmembrane region" description="Helical" evidence="1">
    <location>
        <begin position="303"/>
        <end position="323"/>
    </location>
</feature>
<feature type="transmembrane region" description="Helical" evidence="1">
    <location>
        <begin position="345"/>
        <end position="365"/>
    </location>
</feature>
<feature type="transmembrane region" description="Helical" evidence="1">
    <location>
        <begin position="382"/>
        <end position="402"/>
    </location>
</feature>
<feature type="transmembrane region" description="Helical" evidence="1">
    <location>
        <begin position="670"/>
        <end position="690"/>
    </location>
</feature>
<feature type="transmembrane region" description="Helical" evidence="1">
    <location>
        <begin position="711"/>
        <end position="731"/>
    </location>
</feature>
<feature type="transmembrane region" description="Helical" evidence="1">
    <location>
        <begin position="738"/>
        <end position="758"/>
    </location>
</feature>
<feature type="glycosylation site" description="N-linked (GlcNAc...) asparagine" evidence="3">
    <location>
        <position position="467"/>
    </location>
</feature>
<feature type="sequence conflict" description="In Ref. 1; AAC39118." evidence="5" ref="1">
    <original>E</original>
    <variation>K</variation>
    <location>
        <position position="483"/>
    </location>
</feature>
<proteinExistence type="evidence at protein level"/>
<dbReference type="EMBL" id="AF000417">
    <property type="protein sequence ID" value="AAC39118.1"/>
    <property type="molecule type" value="mRNA"/>
</dbReference>
<dbReference type="EMBL" id="Z70306">
    <property type="protein sequence ID" value="CAA94323.2"/>
    <property type="molecule type" value="Genomic_DNA"/>
</dbReference>
<dbReference type="PIR" id="T19017">
    <property type="entry name" value="T19017"/>
</dbReference>
<dbReference type="PIR" id="T37329">
    <property type="entry name" value="T37329"/>
</dbReference>
<dbReference type="RefSeq" id="NP_502002.1">
    <property type="nucleotide sequence ID" value="NM_069601.5"/>
</dbReference>
<dbReference type="SMR" id="Q17758"/>
<dbReference type="FunCoup" id="Q17758">
    <property type="interactions" value="162"/>
</dbReference>
<dbReference type="STRING" id="6239.C06G8.2.2"/>
<dbReference type="TCDB" id="2.A.17.4.3">
    <property type="family name" value="the proton-dependent oligopeptide transporter (pot/ptr) family"/>
</dbReference>
<dbReference type="GlyCosmos" id="Q17758">
    <property type="glycosylation" value="1 site, No reported glycans"/>
</dbReference>
<dbReference type="iPTMnet" id="Q17758"/>
<dbReference type="PaxDb" id="6239-C06G8.2"/>
<dbReference type="PeptideAtlas" id="Q17758"/>
<dbReference type="EnsemblMetazoa" id="C06G8.2.1">
    <property type="protein sequence ID" value="C06G8.2.1"/>
    <property type="gene ID" value="WBGene00003876"/>
</dbReference>
<dbReference type="GeneID" id="177973"/>
<dbReference type="KEGG" id="cel:CELE_C06G8.2"/>
<dbReference type="UCSC" id="C06G8.2">
    <property type="organism name" value="c. elegans"/>
</dbReference>
<dbReference type="AGR" id="WB:WBGene00003876"/>
<dbReference type="CTD" id="177973"/>
<dbReference type="WormBase" id="C06G8.2">
    <property type="protein sequence ID" value="CE28887"/>
    <property type="gene ID" value="WBGene00003876"/>
    <property type="gene designation" value="pept-2"/>
</dbReference>
<dbReference type="eggNOG" id="KOG1237">
    <property type="taxonomic scope" value="Eukaryota"/>
</dbReference>
<dbReference type="HOGENOM" id="CLU_004790_3_0_1"/>
<dbReference type="InParanoid" id="Q17758"/>
<dbReference type="OMA" id="FKVIGTI"/>
<dbReference type="OrthoDB" id="205993at2759"/>
<dbReference type="PhylomeDB" id="Q17758"/>
<dbReference type="Reactome" id="R-CEL-427975">
    <property type="pathway name" value="Proton/oligopeptide cotransporters"/>
</dbReference>
<dbReference type="PRO" id="PR:Q17758"/>
<dbReference type="Proteomes" id="UP000001940">
    <property type="component" value="Chromosome IV"/>
</dbReference>
<dbReference type="Bgee" id="WBGene00003876">
    <property type="expression patterns" value="Expressed in adult organism and 3 other cell types or tissues"/>
</dbReference>
<dbReference type="GO" id="GO:0016324">
    <property type="term" value="C:apical plasma membrane"/>
    <property type="evidence" value="ECO:0000318"/>
    <property type="project" value="GO_Central"/>
</dbReference>
<dbReference type="GO" id="GO:0005886">
    <property type="term" value="C:plasma membrane"/>
    <property type="evidence" value="ECO:0000318"/>
    <property type="project" value="GO_Central"/>
</dbReference>
<dbReference type="GO" id="GO:0071916">
    <property type="term" value="F:dipeptide transmembrane transporter activity"/>
    <property type="evidence" value="ECO:0000318"/>
    <property type="project" value="GO_Central"/>
</dbReference>
<dbReference type="GO" id="GO:0140206">
    <property type="term" value="P:dipeptide import across plasma membrane"/>
    <property type="evidence" value="ECO:0000318"/>
    <property type="project" value="GO_Central"/>
</dbReference>
<dbReference type="GO" id="GO:0036498">
    <property type="term" value="P:IRE1-mediated unfolded protein response"/>
    <property type="evidence" value="ECO:0007007"/>
    <property type="project" value="WormBase"/>
</dbReference>
<dbReference type="GO" id="GO:0015031">
    <property type="term" value="P:protein transport"/>
    <property type="evidence" value="ECO:0007669"/>
    <property type="project" value="UniProtKB-KW"/>
</dbReference>
<dbReference type="FunFam" id="1.20.1250.20:FF:000049">
    <property type="entry name" value="Solute carrier family 15 member 2"/>
    <property type="match status" value="1"/>
</dbReference>
<dbReference type="Gene3D" id="1.20.1250.20">
    <property type="entry name" value="MFS general substrate transporter like domains"/>
    <property type="match status" value="2"/>
</dbReference>
<dbReference type="InterPro" id="IPR036259">
    <property type="entry name" value="MFS_trans_sf"/>
</dbReference>
<dbReference type="InterPro" id="IPR004768">
    <property type="entry name" value="Oligopep_transport"/>
</dbReference>
<dbReference type="InterPro" id="IPR000109">
    <property type="entry name" value="POT_fam"/>
</dbReference>
<dbReference type="InterPro" id="IPR018456">
    <property type="entry name" value="PTR2_symporter_CS"/>
</dbReference>
<dbReference type="NCBIfam" id="TIGR00926">
    <property type="entry name" value="2A1704"/>
    <property type="match status" value="1"/>
</dbReference>
<dbReference type="PANTHER" id="PTHR11654">
    <property type="entry name" value="OLIGOPEPTIDE TRANSPORTER-RELATED"/>
    <property type="match status" value="1"/>
</dbReference>
<dbReference type="Pfam" id="PF00854">
    <property type="entry name" value="PTR2"/>
    <property type="match status" value="2"/>
</dbReference>
<dbReference type="SUPFAM" id="SSF103473">
    <property type="entry name" value="MFS general substrate transporter"/>
    <property type="match status" value="1"/>
</dbReference>
<dbReference type="PROSITE" id="PS01022">
    <property type="entry name" value="PTR2_1"/>
    <property type="match status" value="1"/>
</dbReference>
<dbReference type="PROSITE" id="PS01023">
    <property type="entry name" value="PTR2_2"/>
    <property type="match status" value="1"/>
</dbReference>
<reference key="1">
    <citation type="journal article" date="1998" name="Biochem. J.">
        <title>Two oligopeptide transporters from Caenorhabditis elegans: molecular cloning and functional expression.</title>
        <authorList>
            <person name="Fei Y.-J."/>
            <person name="Fujita T."/>
            <person name="Lapp D.F."/>
            <person name="Ganapathy V."/>
            <person name="Leibach F.H."/>
        </authorList>
    </citation>
    <scope>NUCLEOTIDE SEQUENCE [MRNA]</scope>
    <scope>FUNCTION</scope>
    <scope>DEVELOPMENTAL STAGE</scope>
    <source>
        <strain>Bristol N2</strain>
    </source>
</reference>
<reference key="2">
    <citation type="journal article" date="1998" name="Science">
        <title>Genome sequence of the nematode C. elegans: a platform for investigating biology.</title>
        <authorList>
            <consortium name="The C. elegans sequencing consortium"/>
        </authorList>
    </citation>
    <scope>NUCLEOTIDE SEQUENCE [LARGE SCALE GENOMIC DNA]</scope>
    <source>
        <strain>Bristol N2</strain>
    </source>
</reference>
<reference key="3">
    <citation type="journal article" date="2003" name="J. Biol. Chem.">
        <title>A reduction in intestinal cell pHi due to loss of the Caenorhabditis elegans Na+/H+ exchanger NHX-2 increases life span.</title>
        <authorList>
            <person name="Nehrke K."/>
        </authorList>
    </citation>
    <scope>TISSUE SPECIFICITY</scope>
</reference>
<reference key="4">
    <citation type="journal article" date="2007" name="Mol. Cell. Proteomics">
        <title>Proteomics reveals N-linked glycoprotein diversity in Caenorhabditis elegans and suggests an atypical translocation mechanism for integral membrane proteins.</title>
        <authorList>
            <person name="Kaji H."/>
            <person name="Kamiie J."/>
            <person name="Kawakami H."/>
            <person name="Kido K."/>
            <person name="Yamauchi Y."/>
            <person name="Shinkawa T."/>
            <person name="Taoka M."/>
            <person name="Takahashi N."/>
            <person name="Isobe T."/>
        </authorList>
    </citation>
    <scope>GLYCOSYLATION [LARGE SCALE ANALYSIS] AT ASN-467</scope>
    <scope>IDENTIFICATION BY MASS SPECTROMETRY</scope>
    <source>
        <strain>Bristol N2</strain>
    </source>
</reference>
<protein>
    <recommendedName>
        <fullName>Peptide transporter family 2</fullName>
    </recommendedName>
    <alternativeName>
        <fullName>Di-/tri-peptide transporter CPTA</fullName>
    </alternativeName>
    <alternativeName>
        <fullName>Oligopeptide transporter 1</fullName>
    </alternativeName>
</protein>
<accession>Q17758</accession>
<accession>O76185</accession>
<keyword id="KW-0325">Glycoprotein</keyword>
<keyword id="KW-0472">Membrane</keyword>
<keyword id="KW-0571">Peptide transport</keyword>
<keyword id="KW-0653">Protein transport</keyword>
<keyword id="KW-1185">Reference proteome</keyword>
<keyword id="KW-0812">Transmembrane</keyword>
<keyword id="KW-1133">Transmembrane helix</keyword>
<keyword id="KW-0813">Transport</keyword>